<sequence length="293" mass="33179">MGSQLVPPPSAFNYIESQRDEFQLSHDLTEIVLQFPSTASQITARLSRSCMKIDHCVIEYRQQVPINASGTVIVEIHDKRMTDNESLQASWTFPIRCNIDLHYFSSSFFSLKDPIPWKLYYRVSDSNVHQMTHFAKFKGKLKLSSAKHSVDIPFRAPTVKILAKQFSEKDIDFWHVGYGKWERRLVKSASSSRFGLRGPIEINPGESWATKSAIGPTNRNADLDIEEELLPYRELNRLGTNILDPGESASIVGIQRSQSNITMSMSQLNELVRSTVHECIKTSCIPSTPKSLS</sequence>
<organismHost>
    <name type="scientific">Cucurbita moschata</name>
    <name type="common">Winter crookneck squash</name>
    <name type="synonym">Cucurbita pepo var. moschata</name>
    <dbReference type="NCBI Taxonomy" id="3662"/>
</organismHost>
<organismHost>
    <name type="scientific">Cucurbita pepo</name>
    <name type="common">Vegetable marrow</name>
    <name type="synonym">Summer squash</name>
    <dbReference type="NCBI Taxonomy" id="3663"/>
</organismHost>
<organismHost>
    <name type="scientific">Phaseolus vulgaris</name>
    <name type="common">Kidney bean</name>
    <name type="synonym">French bean</name>
    <dbReference type="NCBI Taxonomy" id="3885"/>
</organismHost>
<feature type="chain" id="PRO_0000222257" description="Movement protein BC1">
    <location>
        <begin position="1"/>
        <end position="293"/>
    </location>
</feature>
<feature type="mutagenesis site" description="No effect on subcellular location. Reduced levels of infectivity and very attenuated disease symptoms. No effect on NSP relocalization." evidence="2">
    <original>F</original>
    <variation>A</variation>
    <location>
        <position position="35"/>
    </location>
</feature>
<feature type="mutagenesis site" description="No effect on subcellular location. Reduced levels of infectivity and very attenuated disease symptoms. No effect on NSP relocalization." evidence="2">
    <original>N</original>
    <variation>A</variation>
    <location>
        <position position="67"/>
    </location>
</feature>
<feature type="mutagenesis site" description="Mislocalizes to the cytoplasm. Complete loss of infectivity." evidence="2">
    <original>DKR</original>
    <variation>AKA</variation>
    <location>
        <begin position="78"/>
        <end position="80"/>
    </location>
</feature>
<feature type="mutagenesis site" description="No effect on subcellular location. No effect on infectivity. No effect on NSP relocalization." evidence="2">
    <original>K</original>
    <variation>A</variation>
    <location>
        <position position="79"/>
    </location>
</feature>
<feature type="mutagenesis site" description="Mislocalizes to the cytoplasm. Complete loss of infectivity." evidence="2">
    <original>KD</original>
    <variation>AA</variation>
    <location>
        <begin position="112"/>
        <end position="113"/>
    </location>
</feature>
<feature type="mutagenesis site" description="No effect on subcellular location. Complete loss of infectivity." evidence="2">
    <original>YY</original>
    <variation>AA</variation>
    <location>
        <begin position="120"/>
        <end position="121"/>
    </location>
</feature>
<feature type="mutagenesis site" description="No effect on subcellular location. Loss of NSP relocalization. Reduced levels of infectivity and very attenuated disease symptoms." evidence="2">
    <original>KLK</original>
    <variation>ALA</variation>
    <location>
        <begin position="140"/>
        <end position="142"/>
    </location>
</feature>
<feature type="mutagenesis site" description="No effect on subcellular location. Loss of NSP relocalization. Reduced levels of infectivity and very attenuated disease symptoms." evidence="2">
    <original>KH</original>
    <variation>AA</variation>
    <location>
        <begin position="147"/>
        <end position="148"/>
    </location>
</feature>
<feature type="mutagenesis site" description="Mislocalizes to the cytoplasm. Complete loss of infectivity." evidence="2">
    <original>WATK</original>
    <variation>AATA</variation>
    <location>
        <begin position="208"/>
        <end position="211"/>
    </location>
</feature>
<feature type="mutagenesis site" description="No effect on subcellular location. No effect on infectivity." evidence="2">
    <original>EE</original>
    <variation>AA</variation>
    <location>
        <begin position="227"/>
        <end position="228"/>
    </location>
</feature>
<feature type="mutagenesis site" description="Mislocalizes to the cytoplasm. Almost complete loss of infectivity." evidence="2">
    <original>N</original>
    <variation>A</variation>
    <location>
        <position position="260"/>
    </location>
</feature>
<keyword id="KW-0238">DNA-binding</keyword>
<keyword id="KW-1032">Host cell membrane</keyword>
<keyword id="KW-1038">Host endoplasmic reticulum</keyword>
<keyword id="KW-1043">Host membrane</keyword>
<keyword id="KW-1044">Host microsome</keyword>
<keyword id="KW-0472">Membrane</keyword>
<keyword id="KW-0597">Phosphoprotein</keyword>
<keyword id="KW-1185">Reference proteome</keyword>
<keyword id="KW-0813">Transport</keyword>
<keyword id="KW-0916">Viral movement protein</keyword>
<protein>
    <recommendedName>
        <fullName>Movement protein BC1</fullName>
    </recommendedName>
    <alternativeName>
        <fullName>Movement protein BL1</fullName>
    </alternativeName>
</protein>
<organism>
    <name type="scientific">Squash leaf curl virus</name>
    <name type="common">SLCV</name>
    <dbReference type="NCBI Taxonomy" id="10829"/>
    <lineage>
        <taxon>Viruses</taxon>
        <taxon>Monodnaviria</taxon>
        <taxon>Shotokuvirae</taxon>
        <taxon>Cressdnaviricota</taxon>
        <taxon>Repensiviricetes</taxon>
        <taxon>Geplafuvirales</taxon>
        <taxon>Geminiviridae</taxon>
        <taxon>Begomovirus</taxon>
    </lineage>
</organism>
<dbReference type="EMBL" id="M38182">
    <property type="protein sequence ID" value="AAC32409.1"/>
    <property type="status" value="ALT_INIT"/>
    <property type="molecule type" value="Genomic_DNA"/>
</dbReference>
<dbReference type="PIR" id="B36785">
    <property type="entry name" value="QQCVBV"/>
</dbReference>
<dbReference type="RefSeq" id="NP_047248.1">
    <property type="nucleotide sequence ID" value="NC_001937.1"/>
</dbReference>
<dbReference type="KEGG" id="vg:956399"/>
<dbReference type="OrthoDB" id="11948at10239"/>
<dbReference type="Proteomes" id="UP000009151">
    <property type="component" value="Genome"/>
</dbReference>
<dbReference type="GO" id="GO:0044167">
    <property type="term" value="C:host cell endoplasmic reticulum membrane"/>
    <property type="evidence" value="ECO:0007669"/>
    <property type="project" value="UniProtKB-SubCell"/>
</dbReference>
<dbReference type="GO" id="GO:0020002">
    <property type="term" value="C:host cell plasma membrane"/>
    <property type="evidence" value="ECO:0007669"/>
    <property type="project" value="UniProtKB-SubCell"/>
</dbReference>
<dbReference type="GO" id="GO:0016020">
    <property type="term" value="C:membrane"/>
    <property type="evidence" value="ECO:0007669"/>
    <property type="project" value="UniProtKB-KW"/>
</dbReference>
<dbReference type="GO" id="GO:0003677">
    <property type="term" value="F:DNA binding"/>
    <property type="evidence" value="ECO:0007669"/>
    <property type="project" value="UniProtKB-KW"/>
</dbReference>
<dbReference type="GO" id="GO:0046740">
    <property type="term" value="P:transport of virus in host, cell to cell"/>
    <property type="evidence" value="ECO:0007669"/>
    <property type="project" value="UniProtKB-KW"/>
</dbReference>
<dbReference type="InterPro" id="IPR000211">
    <property type="entry name" value="Gemini_BL"/>
</dbReference>
<dbReference type="Pfam" id="PF00845">
    <property type="entry name" value="Gemini_BL1"/>
    <property type="match status" value="1"/>
</dbReference>
<name>MVP_SLCV</name>
<comment type="function">
    <text evidence="2">Transports viral genome to neighboring plant cells directly through plasmosdesmata, without any budding. The movement protein allows efficient cell to cell propagation, by bypassing the host cell wall barrier. Begomovirus genome is shuttled out of nucleus by Nuclear shuttle protein (NSP) and the movement protein transports the DNA-NSP complex to cell plasmodesmata and facilitates further movement across the cell wall.</text>
</comment>
<comment type="subunit">
    <text evidence="1">Binds to dimeric supercoiled plasmid DNA.</text>
</comment>
<comment type="subcellular location">
    <subcellularLocation>
        <location evidence="2">Host cell membrane</location>
        <topology evidence="2">Peripheral membrane protein</topology>
        <orientation evidence="2">Cytoplasmic side</orientation>
    </subcellularLocation>
    <subcellularLocation>
        <location evidence="2">Host microsome membrane</location>
        <topology evidence="2">Peripheral membrane protein</topology>
        <orientation evidence="2">Cytoplasmic side</orientation>
    </subcellularLocation>
    <subcellularLocation>
        <location evidence="2">Host endoplasmic reticulum membrane</location>
        <topology evidence="2">Peripheral membrane protein</topology>
        <orientation evidence="2">Cytoplasmic side</orientation>
    </subcellularLocation>
    <text>Found on ER-derived vesicles.</text>
</comment>
<comment type="PTM">
    <text evidence="1">Phosphorylated.</text>
</comment>
<comment type="similarity">
    <text evidence="3">Belongs to the begomovirus movement protein BC1 family.</text>
</comment>
<comment type="sequence caution" evidence="3">
    <conflict type="erroneous initiation">
        <sequence resource="EMBL-CDS" id="AAC32409"/>
    </conflict>
</comment>
<reference key="1">
    <citation type="journal article" date="1991" name="Virology">
        <title>Infectivity and complete nucleotide sequence of the cloned genomic components of a bipartite squash leaf curl geminivirus with a broad host range phenotype.</title>
        <authorList>
            <person name="Lazarowitz S.G."/>
            <person name="Lazdins I.B."/>
        </authorList>
    </citation>
    <scope>NUCLEOTIDE SEQUENCE [GENOMIC DNA]</scope>
</reference>
<reference key="2">
    <citation type="journal article" date="1995" name="Plant Cell">
        <title>Cooperation in viral movement: the geminivirus BL1 movement protein interacts with BR1 and redirects it from the nucleus to the eell periphery.</title>
        <authorList>
            <person name="Sanderfoot A.A."/>
            <person name="Lazarowitz S.G."/>
        </authorList>
    </citation>
    <scope>FUNCTION</scope>
    <scope>SUBCELLULAR LOCATION</scope>
    <scope>MUTAGENESIS OF PHE-35; ASN-67; 78-ASP--ARG-80; LYS-79; 112-LYS-ASP-113; 120-TYR-TYR-121; 140-LYS--LYS-142; 147-LYS-HIS-148; 208-TRP--LYS-211; 227-GLU-GLU-228 AND ASN-260</scope>
</reference>
<gene>
    <name type="ORF">BC1</name>
    <name type="ORF">BL1</name>
</gene>
<evidence type="ECO:0000250" key="1"/>
<evidence type="ECO:0000269" key="2">
    <source>
    </source>
</evidence>
<evidence type="ECO:0000305" key="3"/>
<accession>P21936</accession>
<proteinExistence type="evidence at protein level"/>